<proteinExistence type="evidence at protein level"/>
<keyword id="KW-0238">DNA-binding</keyword>
<keyword id="KW-0539">Nucleus</keyword>
<keyword id="KW-1185">Reference proteome</keyword>
<keyword id="KW-0804">Transcription</keyword>
<keyword id="KW-0805">Transcription regulation</keyword>
<reference key="1">
    <citation type="journal article" date="2000" name="Nature">
        <title>Sequence and analysis of chromosome 1 of the plant Arabidopsis thaliana.</title>
        <authorList>
            <person name="Theologis A."/>
            <person name="Ecker J.R."/>
            <person name="Palm C.J."/>
            <person name="Federspiel N.A."/>
            <person name="Kaul S."/>
            <person name="White O."/>
            <person name="Alonso J."/>
            <person name="Altafi H."/>
            <person name="Araujo R."/>
            <person name="Bowman C.L."/>
            <person name="Brooks S.Y."/>
            <person name="Buehler E."/>
            <person name="Chan A."/>
            <person name="Chao Q."/>
            <person name="Chen H."/>
            <person name="Cheuk R.F."/>
            <person name="Chin C.W."/>
            <person name="Chung M.K."/>
            <person name="Conn L."/>
            <person name="Conway A.B."/>
            <person name="Conway A.R."/>
            <person name="Creasy T.H."/>
            <person name="Dewar K."/>
            <person name="Dunn P."/>
            <person name="Etgu P."/>
            <person name="Feldblyum T.V."/>
            <person name="Feng J.-D."/>
            <person name="Fong B."/>
            <person name="Fujii C.Y."/>
            <person name="Gill J.E."/>
            <person name="Goldsmith A.D."/>
            <person name="Haas B."/>
            <person name="Hansen N.F."/>
            <person name="Hughes B."/>
            <person name="Huizar L."/>
            <person name="Hunter J.L."/>
            <person name="Jenkins J."/>
            <person name="Johnson-Hopson C."/>
            <person name="Khan S."/>
            <person name="Khaykin E."/>
            <person name="Kim C.J."/>
            <person name="Koo H.L."/>
            <person name="Kremenetskaia I."/>
            <person name="Kurtz D.B."/>
            <person name="Kwan A."/>
            <person name="Lam B."/>
            <person name="Langin-Hooper S."/>
            <person name="Lee A."/>
            <person name="Lee J.M."/>
            <person name="Lenz C.A."/>
            <person name="Li J.H."/>
            <person name="Li Y.-P."/>
            <person name="Lin X."/>
            <person name="Liu S.X."/>
            <person name="Liu Z.A."/>
            <person name="Luros J.S."/>
            <person name="Maiti R."/>
            <person name="Marziali A."/>
            <person name="Militscher J."/>
            <person name="Miranda M."/>
            <person name="Nguyen M."/>
            <person name="Nierman W.C."/>
            <person name="Osborne B.I."/>
            <person name="Pai G."/>
            <person name="Peterson J."/>
            <person name="Pham P.K."/>
            <person name="Rizzo M."/>
            <person name="Rooney T."/>
            <person name="Rowley D."/>
            <person name="Sakano H."/>
            <person name="Salzberg S.L."/>
            <person name="Schwartz J.R."/>
            <person name="Shinn P."/>
            <person name="Southwick A.M."/>
            <person name="Sun H."/>
            <person name="Tallon L.J."/>
            <person name="Tambunga G."/>
            <person name="Toriumi M.J."/>
            <person name="Town C.D."/>
            <person name="Utterback T."/>
            <person name="Van Aken S."/>
            <person name="Vaysberg M."/>
            <person name="Vysotskaia V.S."/>
            <person name="Walker M."/>
            <person name="Wu D."/>
            <person name="Yu G."/>
            <person name="Fraser C.M."/>
            <person name="Venter J.C."/>
            <person name="Davis R.W."/>
        </authorList>
    </citation>
    <scope>NUCLEOTIDE SEQUENCE [LARGE SCALE GENOMIC DNA]</scope>
    <source>
        <strain>cv. Columbia</strain>
    </source>
</reference>
<reference key="2">
    <citation type="journal article" date="2017" name="Plant J.">
        <title>Araport11: a complete reannotation of the Arabidopsis thaliana reference genome.</title>
        <authorList>
            <person name="Cheng C.Y."/>
            <person name="Krishnakumar V."/>
            <person name="Chan A.P."/>
            <person name="Thibaud-Nissen F."/>
            <person name="Schobel S."/>
            <person name="Town C.D."/>
        </authorList>
    </citation>
    <scope>GENOME REANNOTATION</scope>
    <source>
        <strain>cv. Columbia</strain>
    </source>
</reference>
<reference key="3">
    <citation type="journal article" date="2003" name="Science">
        <title>Empirical analysis of transcriptional activity in the Arabidopsis genome.</title>
        <authorList>
            <person name="Yamada K."/>
            <person name="Lim J."/>
            <person name="Dale J.M."/>
            <person name="Chen H."/>
            <person name="Shinn P."/>
            <person name="Palm C.J."/>
            <person name="Southwick A.M."/>
            <person name="Wu H.C."/>
            <person name="Kim C.J."/>
            <person name="Nguyen M."/>
            <person name="Pham P.K."/>
            <person name="Cheuk R.F."/>
            <person name="Karlin-Newmann G."/>
            <person name="Liu S.X."/>
            <person name="Lam B."/>
            <person name="Sakano H."/>
            <person name="Wu T."/>
            <person name="Yu G."/>
            <person name="Miranda M."/>
            <person name="Quach H.L."/>
            <person name="Tripp M."/>
            <person name="Chang C.H."/>
            <person name="Lee J.M."/>
            <person name="Toriumi M.J."/>
            <person name="Chan M.M."/>
            <person name="Tang C.C."/>
            <person name="Onodera C.S."/>
            <person name="Deng J.M."/>
            <person name="Akiyama K."/>
            <person name="Ansari Y."/>
            <person name="Arakawa T."/>
            <person name="Banh J."/>
            <person name="Banno F."/>
            <person name="Bowser L."/>
            <person name="Brooks S.Y."/>
            <person name="Carninci P."/>
            <person name="Chao Q."/>
            <person name="Choy N."/>
            <person name="Enju A."/>
            <person name="Goldsmith A.D."/>
            <person name="Gurjal M."/>
            <person name="Hansen N.F."/>
            <person name="Hayashizaki Y."/>
            <person name="Johnson-Hopson C."/>
            <person name="Hsuan V.W."/>
            <person name="Iida K."/>
            <person name="Karnes M."/>
            <person name="Khan S."/>
            <person name="Koesema E."/>
            <person name="Ishida J."/>
            <person name="Jiang P.X."/>
            <person name="Jones T."/>
            <person name="Kawai J."/>
            <person name="Kamiya A."/>
            <person name="Meyers C."/>
            <person name="Nakajima M."/>
            <person name="Narusaka M."/>
            <person name="Seki M."/>
            <person name="Sakurai T."/>
            <person name="Satou M."/>
            <person name="Tamse R."/>
            <person name="Vaysberg M."/>
            <person name="Wallender E.K."/>
            <person name="Wong C."/>
            <person name="Yamamura Y."/>
            <person name="Yuan S."/>
            <person name="Shinozaki K."/>
            <person name="Davis R.W."/>
            <person name="Theologis A."/>
            <person name="Ecker J.R."/>
        </authorList>
    </citation>
    <scope>NUCLEOTIDE SEQUENCE [LARGE SCALE MRNA]</scope>
    <source>
        <strain>cv. Columbia</strain>
    </source>
</reference>
<reference key="4">
    <citation type="submission" date="2002-03" db="EMBL/GenBank/DDBJ databases">
        <title>Full-length cDNA from Arabidopsis thaliana.</title>
        <authorList>
            <person name="Brover V.V."/>
            <person name="Troukhan M.E."/>
            <person name="Alexandrov N.A."/>
            <person name="Lu Y.-P."/>
            <person name="Flavell R.B."/>
            <person name="Feldmann K.A."/>
        </authorList>
    </citation>
    <scope>NUCLEOTIDE SEQUENCE [LARGE SCALE MRNA]</scope>
</reference>
<reference key="5">
    <citation type="journal article" date="2003" name="Mol. Biol. Evol.">
        <title>The basic helix-loop-helix transcription factor family in plants: a genome-wide study of protein structure and functional diversity.</title>
        <authorList>
            <person name="Heim M.A."/>
            <person name="Jakoby M."/>
            <person name="Werber M."/>
            <person name="Martin C."/>
            <person name="Weisshaar B."/>
            <person name="Bailey P.C."/>
        </authorList>
    </citation>
    <scope>NUCLEOTIDE SEQUENCE [MRNA] OF 52-311</scope>
    <scope>TISSUE SPECIFICITY</scope>
    <scope>INDUCTION</scope>
    <scope>GENE FAMILY</scope>
    <scope>NOMENCLATURE</scope>
    <source>
        <strain>cv. Columbia</strain>
        <tissue>Flower</tissue>
    </source>
</reference>
<reference key="6">
    <citation type="journal article" date="2003" name="Plant Cell">
        <title>The Arabidopsis basic/helix-loop-helix transcription factor family.</title>
        <authorList>
            <person name="Toledo-Ortiz G."/>
            <person name="Huq E."/>
            <person name="Quail P.H."/>
        </authorList>
    </citation>
    <scope>GENE FAMILY</scope>
</reference>
<reference key="7">
    <citation type="journal article" date="2003" name="Plant Cell">
        <title>Update on the basic helix-loop-helix transcription factor gene family in Arabidopsis thaliana.</title>
        <authorList>
            <person name="Bailey P.C."/>
            <person name="Martin C."/>
            <person name="Toledo-Ortiz G."/>
            <person name="Quail P.H."/>
            <person name="Huq E."/>
            <person name="Heim M.A."/>
            <person name="Jakoby M."/>
            <person name="Werber M."/>
            <person name="Weisshaar B."/>
        </authorList>
    </citation>
    <scope>GENE FAMILY</scope>
    <scope>NOMENCLATURE</scope>
</reference>
<reference key="8">
    <citation type="journal article" date="2005" name="Cell">
        <title>A new class of transcription factors mediates brassinosteroid-regulated gene expression in Arabidopsis.</title>
        <authorList>
            <person name="Yin Y."/>
            <person name="Vafeados D."/>
            <person name="Tao Y."/>
            <person name="Yoshida S."/>
            <person name="Asami T."/>
            <person name="Chory J."/>
        </authorList>
    </citation>
    <scope>IDENTIFICATION</scope>
    <scope>INTERACTION WITH BZR2/BES1</scope>
</reference>
<gene>
    <name type="primary">BIM2</name>
    <name type="synonym">BHLH102</name>
    <name type="synonym">EN125</name>
    <name type="ordered locus">At1g69010</name>
    <name type="ORF">T6L1.19</name>
</gene>
<comment type="function">
    <text>Positive brassinosteroid-signaling protein.</text>
</comment>
<comment type="subunit">
    <text evidence="4 5">Homodimer (Probable). Interacts with the N-terminus of BZR2/BES1.</text>
</comment>
<comment type="interaction">
    <interactant intactId="EBI-4476396">
        <id>Q9CAA4</id>
    </interactant>
    <interactant intactId="EBI-2309076">
        <id>Q84R27</id>
        <label>At3g18960</label>
    </interactant>
    <organismsDiffer>false</organismsDiffer>
    <experiments>4</experiments>
</comment>
<comment type="interaction">
    <interactant intactId="EBI-4476396">
        <id>Q9CAA4</id>
    </interactant>
    <interactant intactId="EBI-617095">
        <id>Q9LEZ3</id>
        <label>BIM1</label>
    </interactant>
    <organismsDiffer>false</organismsDiffer>
    <experiments>14</experiments>
</comment>
<comment type="interaction">
    <interactant intactId="EBI-4476396">
        <id>Q9CAA4</id>
    </interactant>
    <interactant intactId="EBI-4476396">
        <id>Q9CAA4</id>
        <label>BIM2</label>
    </interactant>
    <organismsDiffer>false</organismsDiffer>
    <experiments>6</experiments>
</comment>
<comment type="interaction">
    <interactant intactId="EBI-4476396">
        <id>Q9CAA4</id>
    </interactant>
    <interactant intactId="EBI-617113">
        <id>Q9FMB6</id>
        <label>BIM3</label>
    </interactant>
    <organismsDiffer>false</organismsDiffer>
    <experiments>6</experiments>
</comment>
<comment type="subcellular location">
    <subcellularLocation>
        <location evidence="5">Nucleus</location>
    </subcellularLocation>
</comment>
<comment type="tissue specificity">
    <text evidence="3">Expressed constitutively in roots, leaves, stems, and flowers.</text>
</comment>
<comment type="induction">
    <text evidence="3">Repressed by heat treatment.</text>
</comment>
<sequence>MRTGKGNQEEEDYGEEDFNSKREGPSSNTTVHSNRDSKENDKASAIRSKHSVTEQRRRSKINERFQILRELIPNSEQKRDTASFLLEVIDYVQYLQEKVQKYEGSYPGWSQEPTKLTPWRNNHWRVQSLGNHPVAINNGSGPGIPFPGKFEDNTVTSTPAIIAEPQIPIESDKARAITGISIESQPELDDKGLPPLQPILPMVQGEQANECPATSDGLGQSNDLVIEGGTISISSAYSHELLSSLTQALQNAGIDLSQAKLSVQIDLGKRANQGLTHEEPSSKNPLSYDTQGRDSSVEEESEHSHKRMKTL</sequence>
<accession>Q9CAA4</accession>
<accession>Q8LC47</accession>
<accession>Q8RXV7</accession>
<name>BIM2_ARATH</name>
<organism>
    <name type="scientific">Arabidopsis thaliana</name>
    <name type="common">Mouse-ear cress</name>
    <dbReference type="NCBI Taxonomy" id="3702"/>
    <lineage>
        <taxon>Eukaryota</taxon>
        <taxon>Viridiplantae</taxon>
        <taxon>Streptophyta</taxon>
        <taxon>Embryophyta</taxon>
        <taxon>Tracheophyta</taxon>
        <taxon>Spermatophyta</taxon>
        <taxon>Magnoliopsida</taxon>
        <taxon>eudicotyledons</taxon>
        <taxon>Gunneridae</taxon>
        <taxon>Pentapetalae</taxon>
        <taxon>rosids</taxon>
        <taxon>malvids</taxon>
        <taxon>Brassicales</taxon>
        <taxon>Brassicaceae</taxon>
        <taxon>Camelineae</taxon>
        <taxon>Arabidopsis</taxon>
    </lineage>
</organism>
<protein>
    <recommendedName>
        <fullName>Transcription factor BIM2</fullName>
    </recommendedName>
    <alternativeName>
        <fullName>BES1-interacting Myc-like protein 2</fullName>
    </alternativeName>
    <alternativeName>
        <fullName>Basic helix-loop-helix protein 102</fullName>
        <shortName>AtbHLH102</shortName>
        <shortName>bHLH 102</shortName>
    </alternativeName>
    <alternativeName>
        <fullName>Transcription factor EN 125</fullName>
    </alternativeName>
    <alternativeName>
        <fullName>bHLH transcription factor bHLH102</fullName>
    </alternativeName>
</protein>
<feature type="chain" id="PRO_0000127154" description="Transcription factor BIM2">
    <location>
        <begin position="1"/>
        <end position="311"/>
    </location>
</feature>
<feature type="domain" description="bHLH" evidence="1">
    <location>
        <begin position="45"/>
        <end position="95"/>
    </location>
</feature>
<feature type="region of interest" description="Disordered" evidence="2">
    <location>
        <begin position="1"/>
        <end position="60"/>
    </location>
</feature>
<feature type="region of interest" description="Disordered" evidence="2">
    <location>
        <begin position="271"/>
        <end position="311"/>
    </location>
</feature>
<feature type="compositionally biased region" description="Basic and acidic residues" evidence="2">
    <location>
        <begin position="33"/>
        <end position="44"/>
    </location>
</feature>
<feature type="compositionally biased region" description="Basic and acidic residues" evidence="2">
    <location>
        <begin position="51"/>
        <end position="60"/>
    </location>
</feature>
<feature type="sequence conflict" description="In Ref. 4; AAM63847." evidence="5" ref="4">
    <original>G</original>
    <variation>R</variation>
    <location>
        <position position="6"/>
    </location>
</feature>
<feature type="sequence conflict" description="In Ref. 3; AAL85017." evidence="5" ref="3">
    <original>V</original>
    <variation>F</variation>
    <location>
        <position position="92"/>
    </location>
</feature>
<feature type="sequence conflict" description="In Ref. 4; AAM63847." evidence="5" ref="4">
    <original>G</original>
    <variation>R</variation>
    <location>
        <position position="192"/>
    </location>
</feature>
<evidence type="ECO:0000255" key="1">
    <source>
        <dbReference type="PROSITE-ProRule" id="PRU00981"/>
    </source>
</evidence>
<evidence type="ECO:0000256" key="2">
    <source>
        <dbReference type="SAM" id="MobiDB-lite"/>
    </source>
</evidence>
<evidence type="ECO:0000269" key="3">
    <source>
    </source>
</evidence>
<evidence type="ECO:0000269" key="4">
    <source>
    </source>
</evidence>
<evidence type="ECO:0000305" key="5"/>
<dbReference type="EMBL" id="AC011665">
    <property type="protein sequence ID" value="AAG51594.1"/>
    <property type="molecule type" value="Genomic_DNA"/>
</dbReference>
<dbReference type="EMBL" id="CP002684">
    <property type="protein sequence ID" value="AEE34875.1"/>
    <property type="molecule type" value="Genomic_DNA"/>
</dbReference>
<dbReference type="EMBL" id="BT002352">
    <property type="protein sequence ID" value="AAN86185.1"/>
    <property type="molecule type" value="mRNA"/>
</dbReference>
<dbReference type="EMBL" id="AY080650">
    <property type="protein sequence ID" value="AAL85017.1"/>
    <property type="molecule type" value="mRNA"/>
</dbReference>
<dbReference type="EMBL" id="AY086798">
    <property type="protein sequence ID" value="AAM63847.1"/>
    <property type="molecule type" value="mRNA"/>
</dbReference>
<dbReference type="EMBL" id="AF488627">
    <property type="status" value="NOT_ANNOTATED_CDS"/>
    <property type="molecule type" value="mRNA"/>
</dbReference>
<dbReference type="PIR" id="E96714">
    <property type="entry name" value="E96714"/>
</dbReference>
<dbReference type="RefSeq" id="NP_177064.1">
    <property type="nucleotide sequence ID" value="NM_105572.5"/>
</dbReference>
<dbReference type="SMR" id="Q9CAA4"/>
<dbReference type="BioGRID" id="28454">
    <property type="interactions" value="9"/>
</dbReference>
<dbReference type="FunCoup" id="Q9CAA4">
    <property type="interactions" value="688"/>
</dbReference>
<dbReference type="IntAct" id="Q9CAA4">
    <property type="interactions" value="7"/>
</dbReference>
<dbReference type="STRING" id="3702.Q9CAA4"/>
<dbReference type="iPTMnet" id="Q9CAA4"/>
<dbReference type="PaxDb" id="3702-AT1G69010.1"/>
<dbReference type="ProteomicsDB" id="240837"/>
<dbReference type="EnsemblPlants" id="AT1G69010.1">
    <property type="protein sequence ID" value="AT1G69010.1"/>
    <property type="gene ID" value="AT1G69010"/>
</dbReference>
<dbReference type="GeneID" id="843233"/>
<dbReference type="Gramene" id="AT1G69010.1">
    <property type="protein sequence ID" value="AT1G69010.1"/>
    <property type="gene ID" value="AT1G69010"/>
</dbReference>
<dbReference type="KEGG" id="ath:AT1G69010"/>
<dbReference type="Araport" id="AT1G69010"/>
<dbReference type="TAIR" id="AT1G69010">
    <property type="gene designation" value="BIM2"/>
</dbReference>
<dbReference type="eggNOG" id="ENOG502QUDM">
    <property type="taxonomic scope" value="Eukaryota"/>
</dbReference>
<dbReference type="HOGENOM" id="CLU_030221_0_0_1"/>
<dbReference type="InParanoid" id="Q9CAA4"/>
<dbReference type="OMA" id="GSHNMID"/>
<dbReference type="PhylomeDB" id="Q9CAA4"/>
<dbReference type="CD-CODE" id="4299E36E">
    <property type="entry name" value="Nucleolus"/>
</dbReference>
<dbReference type="PRO" id="PR:Q9CAA4"/>
<dbReference type="Proteomes" id="UP000006548">
    <property type="component" value="Chromosome 1"/>
</dbReference>
<dbReference type="ExpressionAtlas" id="Q9CAA4">
    <property type="expression patterns" value="baseline and differential"/>
</dbReference>
<dbReference type="GO" id="GO:0005634">
    <property type="term" value="C:nucleus"/>
    <property type="evidence" value="ECO:0007669"/>
    <property type="project" value="UniProtKB-SubCell"/>
</dbReference>
<dbReference type="GO" id="GO:0003700">
    <property type="term" value="F:DNA-binding transcription factor activity"/>
    <property type="evidence" value="ECO:0000250"/>
    <property type="project" value="TAIR"/>
</dbReference>
<dbReference type="GO" id="GO:0042802">
    <property type="term" value="F:identical protein binding"/>
    <property type="evidence" value="ECO:0000353"/>
    <property type="project" value="IntAct"/>
</dbReference>
<dbReference type="GO" id="GO:0046983">
    <property type="term" value="F:protein dimerization activity"/>
    <property type="evidence" value="ECO:0007669"/>
    <property type="project" value="InterPro"/>
</dbReference>
<dbReference type="GO" id="GO:0000976">
    <property type="term" value="F:transcription cis-regulatory region binding"/>
    <property type="evidence" value="ECO:0000353"/>
    <property type="project" value="TAIR"/>
</dbReference>
<dbReference type="GO" id="GO:0006351">
    <property type="term" value="P:DNA-templated transcription"/>
    <property type="evidence" value="ECO:0000315"/>
    <property type="project" value="TAIR"/>
</dbReference>
<dbReference type="CDD" id="cd11453">
    <property type="entry name" value="bHLH_AtBIM_like"/>
    <property type="match status" value="1"/>
</dbReference>
<dbReference type="FunFam" id="4.10.280.10:FF:000093">
    <property type="entry name" value="BHLH domain class transcription factor"/>
    <property type="match status" value="1"/>
</dbReference>
<dbReference type="Gene3D" id="4.10.280.10">
    <property type="entry name" value="Helix-loop-helix DNA-binding domain"/>
    <property type="match status" value="1"/>
</dbReference>
<dbReference type="InterPro" id="IPR011598">
    <property type="entry name" value="bHLH_dom"/>
</dbReference>
<dbReference type="InterPro" id="IPR044295">
    <property type="entry name" value="BIM1/2/3"/>
</dbReference>
<dbReference type="InterPro" id="IPR036638">
    <property type="entry name" value="HLH_DNA-bd_sf"/>
</dbReference>
<dbReference type="PANTHER" id="PTHR46412">
    <property type="entry name" value="BES1-INTERACTING MYC-LIKE PROTEIN"/>
    <property type="match status" value="1"/>
</dbReference>
<dbReference type="PANTHER" id="PTHR46412:SF6">
    <property type="entry name" value="TRANSCRIPTION FACTOR BIM2"/>
    <property type="match status" value="1"/>
</dbReference>
<dbReference type="Pfam" id="PF00010">
    <property type="entry name" value="HLH"/>
    <property type="match status" value="1"/>
</dbReference>
<dbReference type="SMART" id="SM00353">
    <property type="entry name" value="HLH"/>
    <property type="match status" value="1"/>
</dbReference>
<dbReference type="SUPFAM" id="SSF47459">
    <property type="entry name" value="HLH, helix-loop-helix DNA-binding domain"/>
    <property type="match status" value="1"/>
</dbReference>
<dbReference type="PROSITE" id="PS50888">
    <property type="entry name" value="BHLH"/>
    <property type="match status" value="1"/>
</dbReference>